<comment type="catalytic activity">
    <reaction>
        <text>L-seryl-[protein] + ATP = O-phospho-L-seryl-[protein] + ADP + H(+)</text>
        <dbReference type="Rhea" id="RHEA:17989"/>
        <dbReference type="Rhea" id="RHEA-COMP:9863"/>
        <dbReference type="Rhea" id="RHEA-COMP:11604"/>
        <dbReference type="ChEBI" id="CHEBI:15378"/>
        <dbReference type="ChEBI" id="CHEBI:29999"/>
        <dbReference type="ChEBI" id="CHEBI:30616"/>
        <dbReference type="ChEBI" id="CHEBI:83421"/>
        <dbReference type="ChEBI" id="CHEBI:456216"/>
        <dbReference type="EC" id="2.7.11.1"/>
    </reaction>
</comment>
<comment type="catalytic activity">
    <reaction>
        <text>L-threonyl-[protein] + ATP = O-phospho-L-threonyl-[protein] + ADP + H(+)</text>
        <dbReference type="Rhea" id="RHEA:46608"/>
        <dbReference type="Rhea" id="RHEA-COMP:11060"/>
        <dbReference type="Rhea" id="RHEA-COMP:11605"/>
        <dbReference type="ChEBI" id="CHEBI:15378"/>
        <dbReference type="ChEBI" id="CHEBI:30013"/>
        <dbReference type="ChEBI" id="CHEBI:30616"/>
        <dbReference type="ChEBI" id="CHEBI:61977"/>
        <dbReference type="ChEBI" id="CHEBI:456216"/>
        <dbReference type="EC" id="2.7.11.1"/>
    </reaction>
</comment>
<comment type="subunit">
    <text evidence="6">Interacts with ARAC5 and ARAC10.</text>
</comment>
<comment type="subcellular location">
    <subcellularLocation>
        <location evidence="1">Cytoplasm</location>
    </subcellularLocation>
</comment>
<comment type="similarity">
    <text evidence="3">Belongs to the protein kinase superfamily. Ser/Thr protein kinase family.</text>
</comment>
<comment type="sequence caution" evidence="7">
    <conflict type="erroneous gene model prediction">
        <sequence resource="EMBL-CDS" id="AAF27020"/>
    </conflict>
</comment>
<reference key="1">
    <citation type="journal article" date="2000" name="Nature">
        <title>Sequence and analysis of chromosome 3 of the plant Arabidopsis thaliana.</title>
        <authorList>
            <person name="Salanoubat M."/>
            <person name="Lemcke K."/>
            <person name="Rieger M."/>
            <person name="Ansorge W."/>
            <person name="Unseld M."/>
            <person name="Fartmann B."/>
            <person name="Valle G."/>
            <person name="Bloecker H."/>
            <person name="Perez-Alonso M."/>
            <person name="Obermaier B."/>
            <person name="Delseny M."/>
            <person name="Boutry M."/>
            <person name="Grivell L.A."/>
            <person name="Mache R."/>
            <person name="Puigdomenech P."/>
            <person name="De Simone V."/>
            <person name="Choisne N."/>
            <person name="Artiguenave F."/>
            <person name="Robert C."/>
            <person name="Brottier P."/>
            <person name="Wincker P."/>
            <person name="Cattolico L."/>
            <person name="Weissenbach J."/>
            <person name="Saurin W."/>
            <person name="Quetier F."/>
            <person name="Schaefer M."/>
            <person name="Mueller-Auer S."/>
            <person name="Gabel C."/>
            <person name="Fuchs M."/>
            <person name="Benes V."/>
            <person name="Wurmbach E."/>
            <person name="Drzonek H."/>
            <person name="Erfle H."/>
            <person name="Jordan N."/>
            <person name="Bangert S."/>
            <person name="Wiedelmann R."/>
            <person name="Kranz H."/>
            <person name="Voss H."/>
            <person name="Holland R."/>
            <person name="Brandt P."/>
            <person name="Nyakatura G."/>
            <person name="Vezzi A."/>
            <person name="D'Angelo M."/>
            <person name="Pallavicini A."/>
            <person name="Toppo S."/>
            <person name="Simionati B."/>
            <person name="Conrad A."/>
            <person name="Hornischer K."/>
            <person name="Kauer G."/>
            <person name="Loehnert T.-H."/>
            <person name="Nordsiek G."/>
            <person name="Reichelt J."/>
            <person name="Scharfe M."/>
            <person name="Schoen O."/>
            <person name="Bargues M."/>
            <person name="Terol J."/>
            <person name="Climent J."/>
            <person name="Navarro P."/>
            <person name="Collado C."/>
            <person name="Perez-Perez A."/>
            <person name="Ottenwaelder B."/>
            <person name="Duchemin D."/>
            <person name="Cooke R."/>
            <person name="Laudie M."/>
            <person name="Berger-Llauro C."/>
            <person name="Purnelle B."/>
            <person name="Masuy D."/>
            <person name="de Haan M."/>
            <person name="Maarse A.C."/>
            <person name="Alcaraz J.-P."/>
            <person name="Cottet A."/>
            <person name="Casacuberta E."/>
            <person name="Monfort A."/>
            <person name="Argiriou A."/>
            <person name="Flores M."/>
            <person name="Liguori R."/>
            <person name="Vitale D."/>
            <person name="Mannhaupt G."/>
            <person name="Haase D."/>
            <person name="Schoof H."/>
            <person name="Rudd S."/>
            <person name="Zaccaria P."/>
            <person name="Mewes H.-W."/>
            <person name="Mayer K.F.X."/>
            <person name="Kaul S."/>
            <person name="Town C.D."/>
            <person name="Koo H.L."/>
            <person name="Tallon L.J."/>
            <person name="Jenkins J."/>
            <person name="Rooney T."/>
            <person name="Rizzo M."/>
            <person name="Walts A."/>
            <person name="Utterback T."/>
            <person name="Fujii C.Y."/>
            <person name="Shea T.P."/>
            <person name="Creasy T.H."/>
            <person name="Haas B."/>
            <person name="Maiti R."/>
            <person name="Wu D."/>
            <person name="Peterson J."/>
            <person name="Van Aken S."/>
            <person name="Pai G."/>
            <person name="Militscher J."/>
            <person name="Sellers P."/>
            <person name="Gill J.E."/>
            <person name="Feldblyum T.V."/>
            <person name="Preuss D."/>
            <person name="Lin X."/>
            <person name="Nierman W.C."/>
            <person name="Salzberg S.L."/>
            <person name="White O."/>
            <person name="Venter J.C."/>
            <person name="Fraser C.M."/>
            <person name="Kaneko T."/>
            <person name="Nakamura Y."/>
            <person name="Sato S."/>
            <person name="Kato T."/>
            <person name="Asamizu E."/>
            <person name="Sasamoto S."/>
            <person name="Kimura T."/>
            <person name="Idesawa K."/>
            <person name="Kawashima K."/>
            <person name="Kishida Y."/>
            <person name="Kiyokawa C."/>
            <person name="Kohara M."/>
            <person name="Matsumoto M."/>
            <person name="Matsuno A."/>
            <person name="Muraki A."/>
            <person name="Nakayama S."/>
            <person name="Nakazaki N."/>
            <person name="Shinpo S."/>
            <person name="Takeuchi C."/>
            <person name="Wada T."/>
            <person name="Watanabe A."/>
            <person name="Yamada M."/>
            <person name="Yasuda M."/>
            <person name="Tabata S."/>
        </authorList>
    </citation>
    <scope>NUCLEOTIDE SEQUENCE [LARGE SCALE GENOMIC DNA]</scope>
    <source>
        <strain>cv. Columbia</strain>
    </source>
</reference>
<reference key="2">
    <citation type="journal article" date="2017" name="Plant J.">
        <title>Araport11: a complete reannotation of the Arabidopsis thaliana reference genome.</title>
        <authorList>
            <person name="Cheng C.Y."/>
            <person name="Krishnakumar V."/>
            <person name="Chan A.P."/>
            <person name="Thibaud-Nissen F."/>
            <person name="Schobel S."/>
            <person name="Town C.D."/>
        </authorList>
    </citation>
    <scope>GENOME REANNOTATION</scope>
    <source>
        <strain>cv. Columbia</strain>
    </source>
</reference>
<reference key="3">
    <citation type="journal article" date="2003" name="Science">
        <title>Empirical analysis of transcriptional activity in the Arabidopsis genome.</title>
        <authorList>
            <person name="Yamada K."/>
            <person name="Lim J."/>
            <person name="Dale J.M."/>
            <person name="Chen H."/>
            <person name="Shinn P."/>
            <person name="Palm C.J."/>
            <person name="Southwick A.M."/>
            <person name="Wu H.C."/>
            <person name="Kim C.J."/>
            <person name="Nguyen M."/>
            <person name="Pham P.K."/>
            <person name="Cheuk R.F."/>
            <person name="Karlin-Newmann G."/>
            <person name="Liu S.X."/>
            <person name="Lam B."/>
            <person name="Sakano H."/>
            <person name="Wu T."/>
            <person name="Yu G."/>
            <person name="Miranda M."/>
            <person name="Quach H.L."/>
            <person name="Tripp M."/>
            <person name="Chang C.H."/>
            <person name="Lee J.M."/>
            <person name="Toriumi M.J."/>
            <person name="Chan M.M."/>
            <person name="Tang C.C."/>
            <person name="Onodera C.S."/>
            <person name="Deng J.M."/>
            <person name="Akiyama K."/>
            <person name="Ansari Y."/>
            <person name="Arakawa T."/>
            <person name="Banh J."/>
            <person name="Banno F."/>
            <person name="Bowser L."/>
            <person name="Brooks S.Y."/>
            <person name="Carninci P."/>
            <person name="Chao Q."/>
            <person name="Choy N."/>
            <person name="Enju A."/>
            <person name="Goldsmith A.D."/>
            <person name="Gurjal M."/>
            <person name="Hansen N.F."/>
            <person name="Hayashizaki Y."/>
            <person name="Johnson-Hopson C."/>
            <person name="Hsuan V.W."/>
            <person name="Iida K."/>
            <person name="Karnes M."/>
            <person name="Khan S."/>
            <person name="Koesema E."/>
            <person name="Ishida J."/>
            <person name="Jiang P.X."/>
            <person name="Jones T."/>
            <person name="Kawai J."/>
            <person name="Kamiya A."/>
            <person name="Meyers C."/>
            <person name="Nakajima M."/>
            <person name="Narusaka M."/>
            <person name="Seki M."/>
            <person name="Sakurai T."/>
            <person name="Satou M."/>
            <person name="Tamse R."/>
            <person name="Vaysberg M."/>
            <person name="Wallender E.K."/>
            <person name="Wong C."/>
            <person name="Yamamura Y."/>
            <person name="Yuan S."/>
            <person name="Shinozaki K."/>
            <person name="Davis R.W."/>
            <person name="Theologis A."/>
            <person name="Ecker J.R."/>
        </authorList>
    </citation>
    <scope>NUCLEOTIDE SEQUENCE [LARGE SCALE MRNA]</scope>
    <source>
        <strain>cv. Columbia</strain>
    </source>
</reference>
<reference key="4">
    <citation type="journal article" date="2008" name="Plant J.">
        <title>A cysteine-rich receptor-like kinase NCRK and a pathogen-induced protein kinase RBK1 are Rop GTPase interactors.</title>
        <authorList>
            <person name="Molendijk A.J."/>
            <person name="Ruperti B."/>
            <person name="Singh M.K."/>
            <person name="Dovzhenko A."/>
            <person name="Ditengou F.A."/>
            <person name="Milia M."/>
            <person name="Westphal L."/>
            <person name="Rosahl S."/>
            <person name="Soellick T.R."/>
            <person name="Uhrig J."/>
            <person name="Weingarten L."/>
            <person name="Huber M."/>
            <person name="Palme K."/>
        </authorList>
    </citation>
    <scope>INTERACTION WITH ARAC5 AND ARAC10</scope>
</reference>
<sequence>MNSASAHDLRLLEVDKEKQDPKSPRGALEACLTRCSISSASSSSDDPPPNREAIDNADADTDVQCKNHRASSNWGKFFKLWKRRSMKRLSSFPPLSGAAPPIIKQNKSADPNMNGMVLHDIYDFQSSLQNFSISDIEIATDNFSPENIIGRGGYADVYQGILPEGKLIAVKRLTKGTPDEQTAEFLSELGIIAHVDHPNTAKFIGCCIEGGMHLVFRLSPLGSLGSLLHGPSKYKLTWSRRYNVALGTADGLVYLHEGCQRRIIHRDIKADNILLTEDFQPQICDFGLAKWLPKQLTHHNVSKFEGTFGYFAPEYFMHGIVDEKTDVFAFGVLLLELITGHPALDESQQSLVLWAKPLLERKAIKELVDPSLGDEYNREELIRLTSTASLCIDQSSLLRPRMSQVVELLLGHEDVVMTPREAKIKMMQRTYSEELLDSVEYNSTKYLGDLDRIREVALAS</sequence>
<feature type="chain" id="PRO_0000403331" description="Receptor-like cytosolic serine/threonine-protein kinase RBK2">
    <location>
        <begin position="1"/>
        <end position="460"/>
    </location>
</feature>
<feature type="domain" description="Protein kinase" evidence="3">
    <location>
        <begin position="143"/>
        <end position="415"/>
    </location>
</feature>
<feature type="region of interest" description="Disordered" evidence="5">
    <location>
        <begin position="1"/>
        <end position="67"/>
    </location>
</feature>
<feature type="compositionally biased region" description="Basic and acidic residues" evidence="5">
    <location>
        <begin position="7"/>
        <end position="23"/>
    </location>
</feature>
<feature type="active site" description="Proton acceptor" evidence="3 4">
    <location>
        <position position="267"/>
    </location>
</feature>
<feature type="binding site" evidence="3">
    <location>
        <begin position="149"/>
        <end position="157"/>
    </location>
    <ligand>
        <name>ATP</name>
        <dbReference type="ChEBI" id="CHEBI:30616"/>
    </ligand>
</feature>
<feature type="binding site" evidence="3">
    <location>
        <position position="171"/>
    </location>
    <ligand>
        <name>ATP</name>
        <dbReference type="ChEBI" id="CHEBI:30616"/>
    </ligand>
</feature>
<feature type="modified residue" description="Phosphothreonine" evidence="2">
    <location>
        <position position="307"/>
    </location>
</feature>
<feature type="modified residue" description="Phosphotyrosine" evidence="2">
    <location>
        <position position="315"/>
    </location>
</feature>
<organism>
    <name type="scientific">Arabidopsis thaliana</name>
    <name type="common">Mouse-ear cress</name>
    <dbReference type="NCBI Taxonomy" id="3702"/>
    <lineage>
        <taxon>Eukaryota</taxon>
        <taxon>Viridiplantae</taxon>
        <taxon>Streptophyta</taxon>
        <taxon>Embryophyta</taxon>
        <taxon>Tracheophyta</taxon>
        <taxon>Spermatophyta</taxon>
        <taxon>Magnoliopsida</taxon>
        <taxon>eudicotyledons</taxon>
        <taxon>Gunneridae</taxon>
        <taxon>Pentapetalae</taxon>
        <taxon>rosids</taxon>
        <taxon>malvids</taxon>
        <taxon>Brassicales</taxon>
        <taxon>Brassicaceae</taxon>
        <taxon>Camelineae</taxon>
        <taxon>Arabidopsis</taxon>
    </lineage>
</organism>
<protein>
    <recommendedName>
        <fullName>Receptor-like cytosolic serine/threonine-protein kinase RBK2</fullName>
        <ecNumber>2.7.11.1</ecNumber>
    </recommendedName>
    <alternativeName>
        <fullName>Protein ROP BINDING PROTEIN KINASES 2</fullName>
    </alternativeName>
</protein>
<keyword id="KW-0067">ATP-binding</keyword>
<keyword id="KW-0963">Cytoplasm</keyword>
<keyword id="KW-0418">Kinase</keyword>
<keyword id="KW-0547">Nucleotide-binding</keyword>
<keyword id="KW-0597">Phosphoprotein</keyword>
<keyword id="KW-1185">Reference proteome</keyword>
<keyword id="KW-0723">Serine/threonine-protein kinase</keyword>
<keyword id="KW-0808">Transferase</keyword>
<accession>Q8RXC8</accession>
<accession>Q9MAA5</accession>
<proteinExistence type="evidence at protein level"/>
<name>RBK2_ARATH</name>
<evidence type="ECO:0000250" key="1"/>
<evidence type="ECO:0000250" key="2">
    <source>
        <dbReference type="UniProtKB" id="O48814"/>
    </source>
</evidence>
<evidence type="ECO:0000255" key="3">
    <source>
        <dbReference type="PROSITE-ProRule" id="PRU00159"/>
    </source>
</evidence>
<evidence type="ECO:0000255" key="4">
    <source>
        <dbReference type="PROSITE-ProRule" id="PRU10027"/>
    </source>
</evidence>
<evidence type="ECO:0000256" key="5">
    <source>
        <dbReference type="SAM" id="MobiDB-lite"/>
    </source>
</evidence>
<evidence type="ECO:0000269" key="6">
    <source>
    </source>
</evidence>
<evidence type="ECO:0000305" key="7"/>
<gene>
    <name type="primary">RBK2</name>
    <name type="ordered locus">At3g05140</name>
    <name type="ORF">T12H1.10</name>
</gene>
<dbReference type="EC" id="2.7.11.1"/>
<dbReference type="EMBL" id="AC009177">
    <property type="protein sequence ID" value="AAF27020.1"/>
    <property type="status" value="ALT_SEQ"/>
    <property type="molecule type" value="Genomic_DNA"/>
</dbReference>
<dbReference type="EMBL" id="CP002686">
    <property type="protein sequence ID" value="AEE74190.1"/>
    <property type="molecule type" value="Genomic_DNA"/>
</dbReference>
<dbReference type="EMBL" id="AY081340">
    <property type="protein sequence ID" value="AAL91229.1"/>
    <property type="molecule type" value="mRNA"/>
</dbReference>
<dbReference type="EMBL" id="AY128831">
    <property type="protein sequence ID" value="AAM91231.1"/>
    <property type="molecule type" value="mRNA"/>
</dbReference>
<dbReference type="RefSeq" id="NP_187165.2">
    <property type="nucleotide sequence ID" value="NM_111386.3"/>
</dbReference>
<dbReference type="SMR" id="Q8RXC8"/>
<dbReference type="BioGRID" id="5011">
    <property type="interactions" value="2"/>
</dbReference>
<dbReference type="IntAct" id="Q8RXC8">
    <property type="interactions" value="1"/>
</dbReference>
<dbReference type="STRING" id="3702.Q8RXC8"/>
<dbReference type="iPTMnet" id="Q8RXC8"/>
<dbReference type="PaxDb" id="3702-AT3G05140.1"/>
<dbReference type="ProteomicsDB" id="236522"/>
<dbReference type="EnsemblPlants" id="AT3G05140.1">
    <property type="protein sequence ID" value="AT3G05140.1"/>
    <property type="gene ID" value="AT3G05140"/>
</dbReference>
<dbReference type="GeneID" id="819676"/>
<dbReference type="Gramene" id="AT3G05140.1">
    <property type="protein sequence ID" value="AT3G05140.1"/>
    <property type="gene ID" value="AT3G05140"/>
</dbReference>
<dbReference type="KEGG" id="ath:AT3G05140"/>
<dbReference type="Araport" id="AT3G05140"/>
<dbReference type="TAIR" id="AT3G05140">
    <property type="gene designation" value="RBK2"/>
</dbReference>
<dbReference type="eggNOG" id="KOG1187">
    <property type="taxonomic scope" value="Eukaryota"/>
</dbReference>
<dbReference type="HOGENOM" id="CLU_000288_155_1_1"/>
<dbReference type="InParanoid" id="Q8RXC8"/>
<dbReference type="OMA" id="RPRMNQA"/>
<dbReference type="PhylomeDB" id="Q8RXC8"/>
<dbReference type="PRO" id="PR:Q8RXC8"/>
<dbReference type="Proteomes" id="UP000006548">
    <property type="component" value="Chromosome 3"/>
</dbReference>
<dbReference type="ExpressionAtlas" id="Q8RXC8">
    <property type="expression patterns" value="baseline and differential"/>
</dbReference>
<dbReference type="GO" id="GO:0005737">
    <property type="term" value="C:cytoplasm"/>
    <property type="evidence" value="ECO:0007005"/>
    <property type="project" value="TAIR"/>
</dbReference>
<dbReference type="GO" id="GO:0005634">
    <property type="term" value="C:nucleus"/>
    <property type="evidence" value="ECO:0007005"/>
    <property type="project" value="TAIR"/>
</dbReference>
<dbReference type="GO" id="GO:0005524">
    <property type="term" value="F:ATP binding"/>
    <property type="evidence" value="ECO:0007669"/>
    <property type="project" value="UniProtKB-KW"/>
</dbReference>
<dbReference type="GO" id="GO:0051020">
    <property type="term" value="F:GTPase binding"/>
    <property type="evidence" value="ECO:0000353"/>
    <property type="project" value="UniProtKB"/>
</dbReference>
<dbReference type="GO" id="GO:0106310">
    <property type="term" value="F:protein serine kinase activity"/>
    <property type="evidence" value="ECO:0007669"/>
    <property type="project" value="RHEA"/>
</dbReference>
<dbReference type="GO" id="GO:0004674">
    <property type="term" value="F:protein serine/threonine kinase activity"/>
    <property type="evidence" value="ECO:0007669"/>
    <property type="project" value="UniProtKB-KW"/>
</dbReference>
<dbReference type="FunFam" id="3.30.200.20:FF:000885">
    <property type="entry name" value="Receptor-like cytosolic serine/threonine-protein kinase RBK2"/>
    <property type="match status" value="1"/>
</dbReference>
<dbReference type="FunFam" id="1.10.510.10:FF:000335">
    <property type="entry name" value="receptor-like cytosolic serine/threonine-protein kinase RBK2"/>
    <property type="match status" value="1"/>
</dbReference>
<dbReference type="Gene3D" id="3.30.200.20">
    <property type="entry name" value="Phosphorylase Kinase, domain 1"/>
    <property type="match status" value="1"/>
</dbReference>
<dbReference type="Gene3D" id="1.10.510.10">
    <property type="entry name" value="Transferase(Phosphotransferase) domain 1"/>
    <property type="match status" value="1"/>
</dbReference>
<dbReference type="InterPro" id="IPR011009">
    <property type="entry name" value="Kinase-like_dom_sf"/>
</dbReference>
<dbReference type="InterPro" id="IPR000719">
    <property type="entry name" value="Prot_kinase_dom"/>
</dbReference>
<dbReference type="InterPro" id="IPR017441">
    <property type="entry name" value="Protein_kinase_ATP_BS"/>
</dbReference>
<dbReference type="InterPro" id="IPR046958">
    <property type="entry name" value="RBK1/2/STUNTED"/>
</dbReference>
<dbReference type="InterPro" id="IPR001245">
    <property type="entry name" value="Ser-Thr/Tyr_kinase_cat_dom"/>
</dbReference>
<dbReference type="InterPro" id="IPR008271">
    <property type="entry name" value="Ser/Thr_kinase_AS"/>
</dbReference>
<dbReference type="PANTHER" id="PTHR47987">
    <property type="entry name" value="OS08G0249100 PROTEIN"/>
    <property type="match status" value="1"/>
</dbReference>
<dbReference type="PANTHER" id="PTHR47987:SF14">
    <property type="entry name" value="RECEPTOR-LIKE CYTOSOLIC SERINE_THREONINE-PROTEIN KINASE RBK2"/>
    <property type="match status" value="1"/>
</dbReference>
<dbReference type="Pfam" id="PF07714">
    <property type="entry name" value="PK_Tyr_Ser-Thr"/>
    <property type="match status" value="1"/>
</dbReference>
<dbReference type="SMART" id="SM00220">
    <property type="entry name" value="S_TKc"/>
    <property type="match status" value="1"/>
</dbReference>
<dbReference type="SUPFAM" id="SSF56112">
    <property type="entry name" value="Protein kinase-like (PK-like)"/>
    <property type="match status" value="1"/>
</dbReference>
<dbReference type="PROSITE" id="PS00107">
    <property type="entry name" value="PROTEIN_KINASE_ATP"/>
    <property type="match status" value="1"/>
</dbReference>
<dbReference type="PROSITE" id="PS50011">
    <property type="entry name" value="PROTEIN_KINASE_DOM"/>
    <property type="match status" value="1"/>
</dbReference>
<dbReference type="PROSITE" id="PS00108">
    <property type="entry name" value="PROTEIN_KINASE_ST"/>
    <property type="match status" value="1"/>
</dbReference>